<reference evidence="19 20" key="1">
    <citation type="journal article" date="2003" name="Oncogene">
        <title>CHD5, a new member of the chromodomain gene family, is preferentially expressed in the nervous system.</title>
        <authorList>
            <person name="Thompson P.M."/>
            <person name="Gotoh T."/>
            <person name="Kok M."/>
            <person name="White P.S."/>
            <person name="Brodeur G.M."/>
        </authorList>
    </citation>
    <scope>NUCLEOTIDE SEQUENCE [MRNA]</scope>
    <scope>TISSUE SPECIFICITY</scope>
</reference>
<reference key="2">
    <citation type="journal article" date="2006" name="Nature">
        <title>The DNA sequence and biological annotation of human chromosome 1.</title>
        <authorList>
            <person name="Gregory S.G."/>
            <person name="Barlow K.F."/>
            <person name="McLay K.E."/>
            <person name="Kaul R."/>
            <person name="Swarbreck D."/>
            <person name="Dunham A."/>
            <person name="Scott C.E."/>
            <person name="Howe K.L."/>
            <person name="Woodfine K."/>
            <person name="Spencer C.C.A."/>
            <person name="Jones M.C."/>
            <person name="Gillson C."/>
            <person name="Searle S."/>
            <person name="Zhou Y."/>
            <person name="Kokocinski F."/>
            <person name="McDonald L."/>
            <person name="Evans R."/>
            <person name="Phillips K."/>
            <person name="Atkinson A."/>
            <person name="Cooper R."/>
            <person name="Jones C."/>
            <person name="Hall R.E."/>
            <person name="Andrews T.D."/>
            <person name="Lloyd C."/>
            <person name="Ainscough R."/>
            <person name="Almeida J.P."/>
            <person name="Ambrose K.D."/>
            <person name="Anderson F."/>
            <person name="Andrew R.W."/>
            <person name="Ashwell R.I.S."/>
            <person name="Aubin K."/>
            <person name="Babbage A.K."/>
            <person name="Bagguley C.L."/>
            <person name="Bailey J."/>
            <person name="Beasley H."/>
            <person name="Bethel G."/>
            <person name="Bird C.P."/>
            <person name="Bray-Allen S."/>
            <person name="Brown J.Y."/>
            <person name="Brown A.J."/>
            <person name="Buckley D."/>
            <person name="Burton J."/>
            <person name="Bye J."/>
            <person name="Carder C."/>
            <person name="Chapman J.C."/>
            <person name="Clark S.Y."/>
            <person name="Clarke G."/>
            <person name="Clee C."/>
            <person name="Cobley V."/>
            <person name="Collier R.E."/>
            <person name="Corby N."/>
            <person name="Coville G.J."/>
            <person name="Davies J."/>
            <person name="Deadman R."/>
            <person name="Dunn M."/>
            <person name="Earthrowl M."/>
            <person name="Ellington A.G."/>
            <person name="Errington H."/>
            <person name="Frankish A."/>
            <person name="Frankland J."/>
            <person name="French L."/>
            <person name="Garner P."/>
            <person name="Garnett J."/>
            <person name="Gay L."/>
            <person name="Ghori M.R.J."/>
            <person name="Gibson R."/>
            <person name="Gilby L.M."/>
            <person name="Gillett W."/>
            <person name="Glithero R.J."/>
            <person name="Grafham D.V."/>
            <person name="Griffiths C."/>
            <person name="Griffiths-Jones S."/>
            <person name="Grocock R."/>
            <person name="Hammond S."/>
            <person name="Harrison E.S.I."/>
            <person name="Hart E."/>
            <person name="Haugen E."/>
            <person name="Heath P.D."/>
            <person name="Holmes S."/>
            <person name="Holt K."/>
            <person name="Howden P.J."/>
            <person name="Hunt A.R."/>
            <person name="Hunt S.E."/>
            <person name="Hunter G."/>
            <person name="Isherwood J."/>
            <person name="James R."/>
            <person name="Johnson C."/>
            <person name="Johnson D."/>
            <person name="Joy A."/>
            <person name="Kay M."/>
            <person name="Kershaw J.K."/>
            <person name="Kibukawa M."/>
            <person name="Kimberley A.M."/>
            <person name="King A."/>
            <person name="Knights A.J."/>
            <person name="Lad H."/>
            <person name="Laird G."/>
            <person name="Lawlor S."/>
            <person name="Leongamornlert D.A."/>
            <person name="Lloyd D.M."/>
            <person name="Loveland J."/>
            <person name="Lovell J."/>
            <person name="Lush M.J."/>
            <person name="Lyne R."/>
            <person name="Martin S."/>
            <person name="Mashreghi-Mohammadi M."/>
            <person name="Matthews L."/>
            <person name="Matthews N.S.W."/>
            <person name="McLaren S."/>
            <person name="Milne S."/>
            <person name="Mistry S."/>
            <person name="Moore M.J.F."/>
            <person name="Nickerson T."/>
            <person name="O'Dell C.N."/>
            <person name="Oliver K."/>
            <person name="Palmeiri A."/>
            <person name="Palmer S.A."/>
            <person name="Parker A."/>
            <person name="Patel D."/>
            <person name="Pearce A.V."/>
            <person name="Peck A.I."/>
            <person name="Pelan S."/>
            <person name="Phelps K."/>
            <person name="Phillimore B.J."/>
            <person name="Plumb R."/>
            <person name="Rajan J."/>
            <person name="Raymond C."/>
            <person name="Rouse G."/>
            <person name="Saenphimmachak C."/>
            <person name="Sehra H.K."/>
            <person name="Sheridan E."/>
            <person name="Shownkeen R."/>
            <person name="Sims S."/>
            <person name="Skuce C.D."/>
            <person name="Smith M."/>
            <person name="Steward C."/>
            <person name="Subramanian S."/>
            <person name="Sycamore N."/>
            <person name="Tracey A."/>
            <person name="Tromans A."/>
            <person name="Van Helmond Z."/>
            <person name="Wall M."/>
            <person name="Wallis J.M."/>
            <person name="White S."/>
            <person name="Whitehead S.L."/>
            <person name="Wilkinson J.E."/>
            <person name="Willey D.L."/>
            <person name="Williams H."/>
            <person name="Wilming L."/>
            <person name="Wray P.W."/>
            <person name="Wu Z."/>
            <person name="Coulson A."/>
            <person name="Vaudin M."/>
            <person name="Sulston J.E."/>
            <person name="Durbin R.M."/>
            <person name="Hubbard T."/>
            <person name="Wooster R."/>
            <person name="Dunham I."/>
            <person name="Carter N.P."/>
            <person name="McVean G."/>
            <person name="Ross M.T."/>
            <person name="Harrow J."/>
            <person name="Olson M.V."/>
            <person name="Beck S."/>
            <person name="Rogers J."/>
            <person name="Bentley D.R."/>
        </authorList>
    </citation>
    <scope>NUCLEOTIDE SEQUENCE [LARGE SCALE GENOMIC DNA]</scope>
</reference>
<reference key="3">
    <citation type="journal article" date="2007" name="BMC Genomics">
        <title>The full-ORF clone resource of the German cDNA consortium.</title>
        <authorList>
            <person name="Bechtel S."/>
            <person name="Rosenfelder H."/>
            <person name="Duda A."/>
            <person name="Schmidt C.P."/>
            <person name="Ernst U."/>
            <person name="Wellenreuther R."/>
            <person name="Mehrle A."/>
            <person name="Schuster C."/>
            <person name="Bahr A."/>
            <person name="Bloecker H."/>
            <person name="Heubner D."/>
            <person name="Hoerlein A."/>
            <person name="Michel G."/>
            <person name="Wedler H."/>
            <person name="Koehrer K."/>
            <person name="Ottenwaelder B."/>
            <person name="Poustka A."/>
            <person name="Wiemann S."/>
            <person name="Schupp I."/>
        </authorList>
    </citation>
    <scope>NUCLEOTIDE SEQUENCE [LARGE SCALE MRNA] OF 567-1954</scope>
    <scope>VARIANT PRO-1539</scope>
    <source>
        <tissue>Testis</tissue>
    </source>
</reference>
<reference key="4">
    <citation type="journal article" date="1997" name="DNA Res.">
        <title>Characterization of cDNA clones in size-fractionated cDNA libraries from human brain.</title>
        <authorList>
            <person name="Seki N."/>
            <person name="Ohira M."/>
            <person name="Nagase T."/>
            <person name="Ishikawa K."/>
            <person name="Miyajima N."/>
            <person name="Nakajima D."/>
            <person name="Nomura N."/>
            <person name="Ohara O."/>
        </authorList>
    </citation>
    <scope>NUCLEOTIDE SEQUENCE [LARGE SCALE MRNA] OF 977-1954</scope>
    <scope>VARIANT PRO-1539</scope>
    <source>
        <tissue>Brain</tissue>
    </source>
</reference>
<reference key="5">
    <citation type="journal article" date="2007" name="Cell">
        <title>CHD5 is a tumor suppressor at human 1p36.</title>
        <authorList>
            <person name="Bagchi A."/>
            <person name="Papazoglu C."/>
            <person name="Wu Y."/>
            <person name="Capurso D."/>
            <person name="Brodt M."/>
            <person name="Francis D."/>
            <person name="Bredel M."/>
            <person name="Vogel H."/>
            <person name="Mills A.A."/>
        </authorList>
    </citation>
    <scope>DISEASE</scope>
</reference>
<reference key="6">
    <citation type="journal article" date="2011" name="PLoS ONE">
        <title>CHD5, a brain-specific paralog of Mi2 chromatin remodeling enzymes, regulates expression of neuronal genes.</title>
        <authorList>
            <person name="Potts R.C."/>
            <person name="Zhang P."/>
            <person name="Wurster A.L."/>
            <person name="Precht P."/>
            <person name="Mughal M.R."/>
            <person name="Wood W.H."/>
            <person name="Zhang Y."/>
            <person name="Becker K.G."/>
            <person name="Mattson M.P."/>
            <person name="Pazin M.J."/>
        </authorList>
    </citation>
    <scope>SUBCELLULAR LOCATION</scope>
    <scope>TISSUE SPECIFICITY</scope>
</reference>
<reference key="7">
    <citation type="journal article" date="2013" name="Dev. Cell">
        <title>CHD5 is required for neurogenesis and has a dual role in facilitating gene expression and polycomb gene repression.</title>
        <authorList>
            <person name="Egan C.M."/>
            <person name="Nyman U."/>
            <person name="Skotte J."/>
            <person name="Streubel G."/>
            <person name="Turner S."/>
            <person name="O'Connell D.J."/>
            <person name="Rraklli V."/>
            <person name="Dolan M.J."/>
            <person name="Chadderton N."/>
            <person name="Hansen K."/>
            <person name="Farrar G.J."/>
            <person name="Helin K."/>
            <person name="Holmberg J."/>
            <person name="Bracken A.P."/>
        </authorList>
    </citation>
    <scope>FUNCTION AS A TRANSCRIPTIONAL REGULATOR</scope>
    <scope>FUNCTION IN NEURON DIFFERENTIATION</scope>
    <scope>INTERACTION WITH HISTONE H3K27ME3</scope>
    <scope>SUBCELLULAR LOCATION</scope>
    <scope>CHROMO DOMAINS</scope>
    <scope>MUTAGENESIS OF LEU-518 AND TYR-619</scope>
</reference>
<reference key="8">
    <citation type="journal article" date="2016" name="J. Biol. Chem.">
        <title>Substrate specificity of the HEMK2 protein glutamine methyltransferase and identification of novel substrates.</title>
        <authorList>
            <person name="Kusevic D."/>
            <person name="Kudithipudi S."/>
            <person name="Jeltsch A."/>
        </authorList>
    </citation>
    <scope>METHYLATION AT GLN-1390</scope>
    <scope>MUTAGENESIS OF GLN-1390</scope>
</reference>
<reference key="9">
    <citation type="journal article" date="2006" name="Science">
        <title>The consensus coding sequences of human breast and colorectal cancers.</title>
        <authorList>
            <person name="Sjoeblom T."/>
            <person name="Jones S."/>
            <person name="Wood L.D."/>
            <person name="Parsons D.W."/>
            <person name="Lin J."/>
            <person name="Barber T.D."/>
            <person name="Mandelker D."/>
            <person name="Leary R.J."/>
            <person name="Ptak J."/>
            <person name="Silliman N."/>
            <person name="Szabo S."/>
            <person name="Buckhaults P."/>
            <person name="Farrell C."/>
            <person name="Meeh P."/>
            <person name="Markowitz S.D."/>
            <person name="Willis J."/>
            <person name="Dawson D."/>
            <person name="Willson J.K.V."/>
            <person name="Gazdar A.F."/>
            <person name="Hartigan J."/>
            <person name="Wu L."/>
            <person name="Liu C."/>
            <person name="Parmigiani G."/>
            <person name="Park B.H."/>
            <person name="Bachman K.E."/>
            <person name="Papadopoulos N."/>
            <person name="Vogelstein B."/>
            <person name="Kinzler K.W."/>
            <person name="Velculescu V.E."/>
        </authorList>
    </citation>
    <scope>VARIANTS [LARGE SCALE ANALYSIS] MET-45; ASN-119 AND GLY-667</scope>
</reference>
<reference key="10">
    <citation type="journal article" date="2021" name="Hum. Genet.">
        <title>Missense and truncating variants in CHD5 in a dominant neurodevelopmental disorder with intellectual disability, behavioral disturbances, and epilepsy.</title>
        <authorList>
            <consortium name="Undiagnosed Diseases Network"/>
            <person name="Parenti I."/>
            <person name="Lehalle D."/>
            <person name="Nava C."/>
            <person name="Torti E."/>
            <person name="Leitao E."/>
            <person name="Person R."/>
            <person name="Mizuguchi T."/>
            <person name="Matsumoto N."/>
            <person name="Kato M."/>
            <person name="Nakamura K."/>
            <person name="de Man S.A."/>
            <person name="Cope H."/>
            <person name="Shashi V."/>
            <person name="Friedman J."/>
            <person name="Joset P."/>
            <person name="Steindl K."/>
            <person name="Rauch A."/>
            <person name="Muffels I."/>
            <person name="van Hasselt P.M."/>
            <person name="Petit F."/>
            <person name="Smol T."/>
            <person name="Le Guyader G."/>
            <person name="Bilan F."/>
            <person name="Sorlin A."/>
            <person name="Vitobello A."/>
            <person name="Philippe C."/>
            <person name="van de Laar I.M.B.H."/>
            <person name="van Slegtenhorst M.A."/>
            <person name="Campeau P.M."/>
            <person name="Au P.Y.B."/>
            <person name="Nakashima M."/>
            <person name="Saitsu H."/>
            <person name="Yamamoto T."/>
            <person name="Nomura Y."/>
            <person name="Louie R.J."/>
            <person name="Lyons M.J."/>
            <person name="Dobson A."/>
            <person name="Plomp A.S."/>
            <person name="Motazacker M.M."/>
            <person name="Kaiser F.J."/>
            <person name="Timberlake A.T."/>
            <person name="Fuchs S.A."/>
            <person name="Depienne C."/>
            <person name="Mignot C."/>
        </authorList>
    </citation>
    <scope>VARIANTS PMNDS GLN-193; TRP-193; VAL-272; 314-GLU--ILE-1954 DEL; LYS-427; 596-ARG--ILE-1954 DEL; PHE-912; ASN-1084; LEU-1124; HIS-1136; ILE-1140; MET-1419; VAL-1488 AND GLY-1714</scope>
    <scope>INVOLVEMENT IN PMNDS</scope>
</reference>
<proteinExistence type="evidence at protein level"/>
<protein>
    <recommendedName>
        <fullName>Chromodomain-helicase-DNA-binding protein 5</fullName>
        <shortName>CHD-5</shortName>
        <ecNumber evidence="2">3.6.4.-</ecNumber>
    </recommendedName>
    <alternativeName>
        <fullName>ATP-dependent helicase CHD5</fullName>
    </alternativeName>
</protein>
<accession>Q8TDI0</accession>
<accession>O75032</accession>
<accession>Q5TG89</accession>
<accession>Q7LGH2</accession>
<accession>Q9UFR9</accession>
<evidence type="ECO:0000250" key="1">
    <source>
        <dbReference type="UniProtKB" id="A2A8L1"/>
    </source>
</evidence>
<evidence type="ECO:0000250" key="2">
    <source>
        <dbReference type="UniProtKB" id="Q12873"/>
    </source>
</evidence>
<evidence type="ECO:0000250" key="3">
    <source>
        <dbReference type="UniProtKB" id="Q14839"/>
    </source>
</evidence>
<evidence type="ECO:0000255" key="4"/>
<evidence type="ECO:0000255" key="5">
    <source>
        <dbReference type="PROSITE-ProRule" id="PRU00053"/>
    </source>
</evidence>
<evidence type="ECO:0000255" key="6">
    <source>
        <dbReference type="PROSITE-ProRule" id="PRU00146"/>
    </source>
</evidence>
<evidence type="ECO:0000255" key="7">
    <source>
        <dbReference type="PROSITE-ProRule" id="PRU00541"/>
    </source>
</evidence>
<evidence type="ECO:0000255" key="8">
    <source>
        <dbReference type="PROSITE-ProRule" id="PRU00542"/>
    </source>
</evidence>
<evidence type="ECO:0000256" key="9">
    <source>
        <dbReference type="SAM" id="MobiDB-lite"/>
    </source>
</evidence>
<evidence type="ECO:0000269" key="10">
    <source>
    </source>
</evidence>
<evidence type="ECO:0000269" key="11">
    <source>
    </source>
</evidence>
<evidence type="ECO:0000269" key="12">
    <source>
    </source>
</evidence>
<evidence type="ECO:0000269" key="13">
    <source>
    </source>
</evidence>
<evidence type="ECO:0000269" key="14">
    <source>
    </source>
</evidence>
<evidence type="ECO:0000269" key="15">
    <source>
    </source>
</evidence>
<evidence type="ECO:0000269" key="16">
    <source>
    </source>
</evidence>
<evidence type="ECO:0000269" key="17">
    <source>
    </source>
</evidence>
<evidence type="ECO:0000269" key="18">
    <source>
    </source>
</evidence>
<evidence type="ECO:0000305" key="19"/>
<evidence type="ECO:0000312" key="20">
    <source>
        <dbReference type="EMBL" id="AAL98962.1"/>
    </source>
</evidence>
<evidence type="ECO:0007829" key="21">
    <source>
        <dbReference type="PDB" id="6GUU"/>
    </source>
</evidence>
<gene>
    <name evidence="20" type="primary">CHD5</name>
    <name type="synonym">KIAA0444</name>
</gene>
<feature type="chain" id="PRO_0000080230" description="Chromodomain-helicase-DNA-binding protein 5">
    <location>
        <begin position="1"/>
        <end position="1954"/>
    </location>
</feature>
<feature type="domain" description="Chromo 1" evidence="5">
    <location>
        <begin position="497"/>
        <end position="554"/>
    </location>
</feature>
<feature type="domain" description="Chromo 2" evidence="5">
    <location>
        <begin position="592"/>
        <end position="653"/>
    </location>
</feature>
<feature type="domain" description="Helicase ATP-binding" evidence="7">
    <location>
        <begin position="712"/>
        <end position="896"/>
    </location>
</feature>
<feature type="domain" description="Helicase C-terminal" evidence="8">
    <location>
        <begin position="1028"/>
        <end position="1193"/>
    </location>
</feature>
<feature type="zinc finger region" description="PHD-type 1" evidence="6">
    <location>
        <begin position="343"/>
        <end position="390"/>
    </location>
</feature>
<feature type="zinc finger region" description="PHD-type 2" evidence="6">
    <location>
        <begin position="416"/>
        <end position="463"/>
    </location>
</feature>
<feature type="region of interest" description="Disordered" evidence="9">
    <location>
        <begin position="1"/>
        <end position="134"/>
    </location>
</feature>
<feature type="region of interest" description="Disordered" evidence="9">
    <location>
        <begin position="225"/>
        <end position="338"/>
    </location>
</feature>
<feature type="region of interest" description="Histone-binding">
    <location>
        <begin position="343"/>
        <end position="653"/>
    </location>
</feature>
<feature type="region of interest" description="Disordered" evidence="9">
    <location>
        <begin position="549"/>
        <end position="571"/>
    </location>
</feature>
<feature type="region of interest" description="Disordered" evidence="9">
    <location>
        <begin position="1209"/>
        <end position="1253"/>
    </location>
</feature>
<feature type="region of interest" description="Disordered" evidence="9">
    <location>
        <begin position="1351"/>
        <end position="1411"/>
    </location>
</feature>
<feature type="region of interest" description="Disordered" evidence="9">
    <location>
        <begin position="1524"/>
        <end position="1564"/>
    </location>
</feature>
<feature type="region of interest" description="Disordered" evidence="9">
    <location>
        <begin position="1597"/>
        <end position="1640"/>
    </location>
</feature>
<feature type="region of interest" description="Disordered" evidence="9">
    <location>
        <begin position="1658"/>
        <end position="1696"/>
    </location>
</feature>
<feature type="short sequence motif" description="DEAH box">
    <location>
        <begin position="847"/>
        <end position="850"/>
    </location>
</feature>
<feature type="compositionally biased region" description="Acidic residues" evidence="9">
    <location>
        <begin position="17"/>
        <end position="37"/>
    </location>
</feature>
<feature type="compositionally biased region" description="Acidic residues" evidence="9">
    <location>
        <begin position="72"/>
        <end position="90"/>
    </location>
</feature>
<feature type="compositionally biased region" description="Basic residues" evidence="9">
    <location>
        <begin position="96"/>
        <end position="115"/>
    </location>
</feature>
<feature type="compositionally biased region" description="Pro residues" evidence="9">
    <location>
        <begin position="227"/>
        <end position="237"/>
    </location>
</feature>
<feature type="compositionally biased region" description="Basic residues" evidence="9">
    <location>
        <begin position="251"/>
        <end position="272"/>
    </location>
</feature>
<feature type="compositionally biased region" description="Acidic residues" evidence="9">
    <location>
        <begin position="291"/>
        <end position="301"/>
    </location>
</feature>
<feature type="compositionally biased region" description="Basic residues" evidence="9">
    <location>
        <begin position="321"/>
        <end position="330"/>
    </location>
</feature>
<feature type="compositionally biased region" description="Basic and acidic residues" evidence="9">
    <location>
        <begin position="561"/>
        <end position="571"/>
    </location>
</feature>
<feature type="compositionally biased region" description="Acidic residues" evidence="9">
    <location>
        <begin position="1355"/>
        <end position="1366"/>
    </location>
</feature>
<feature type="compositionally biased region" description="Acidic residues" evidence="9">
    <location>
        <begin position="1376"/>
        <end position="1385"/>
    </location>
</feature>
<feature type="compositionally biased region" description="Low complexity" evidence="9">
    <location>
        <begin position="1554"/>
        <end position="1564"/>
    </location>
</feature>
<feature type="compositionally biased region" description="Basic and acidic residues" evidence="9">
    <location>
        <begin position="1600"/>
        <end position="1627"/>
    </location>
</feature>
<feature type="compositionally biased region" description="Basic and acidic residues" evidence="9">
    <location>
        <begin position="1658"/>
        <end position="1678"/>
    </location>
</feature>
<feature type="binding site" evidence="3 7">
    <location>
        <begin position="725"/>
        <end position="732"/>
    </location>
    <ligand>
        <name>ATP</name>
        <dbReference type="ChEBI" id="CHEBI:30616"/>
    </ligand>
</feature>
<feature type="modified residue" description="N5-methylglutamine" evidence="16">
    <location>
        <position position="1390"/>
    </location>
</feature>
<feature type="modified residue" description="Phosphoserine" evidence="1">
    <location>
        <position position="1554"/>
    </location>
</feature>
<feature type="sequence variant" id="VAR_035475" description="In a breast cancer sample; somatic mutation; dbSNP:rs1470692239." evidence="11">
    <original>V</original>
    <variation>M</variation>
    <location>
        <position position="45"/>
    </location>
</feature>
<feature type="sequence variant" id="VAR_035476" description="In a breast cancer sample; somatic mutation; dbSNP:rs1667131228." evidence="11">
    <original>D</original>
    <variation>N</variation>
    <location>
        <position position="119"/>
    </location>
</feature>
<feature type="sequence variant" id="VAR_087312" description="In PMNDS; dbSNP:rs1667056923." evidence="17">
    <original>R</original>
    <variation>Q</variation>
    <location>
        <position position="193"/>
    </location>
</feature>
<feature type="sequence variant" id="VAR_087313" description="In PMNDS; dbSNP:rs1571164162." evidence="17">
    <original>R</original>
    <variation>W</variation>
    <location>
        <position position="193"/>
    </location>
</feature>
<feature type="sequence variant" id="VAR_087314" description="In PMNDS; uncertain significance; dbSNP:rs2100866749." evidence="17">
    <original>A</original>
    <variation>V</variation>
    <location>
        <position position="272"/>
    </location>
</feature>
<feature type="sequence variant" id="VAR_087315" description="In PMNDS." evidence="17">
    <location>
        <begin position="314"/>
        <end position="1954"/>
    </location>
</feature>
<feature type="sequence variant" id="VAR_087316" description="In PMNDS; dbSNP:rs2100863089." evidence="17">
    <original>E</original>
    <variation>K</variation>
    <location>
        <position position="427"/>
    </location>
</feature>
<feature type="sequence variant" id="VAR_087317" description="In PMNDS." evidence="17">
    <location>
        <begin position="596"/>
        <end position="1954"/>
    </location>
</feature>
<feature type="sequence variant" id="VAR_035477" description="In a breast cancer sample; somatic mutation." evidence="11">
    <original>R</original>
    <variation>G</variation>
    <location>
        <position position="667"/>
    </location>
</feature>
<feature type="sequence variant" id="VAR_087318" description="In PMNDS; dbSNP:rs1474624774." evidence="17">
    <original>S</original>
    <variation>F</variation>
    <location>
        <position position="912"/>
    </location>
</feature>
<feature type="sequence variant" id="VAR_087319" description="In PMNDS; dbSNP:rs760743983." evidence="17">
    <original>D</original>
    <variation>N</variation>
    <location>
        <position position="1084"/>
    </location>
</feature>
<feature type="sequence variant" id="VAR_087320" description="In PMNDS; dbSNP:rs2100847449." evidence="17">
    <original>P</original>
    <variation>L</variation>
    <location>
        <position position="1124"/>
    </location>
</feature>
<feature type="sequence variant" id="VAR_087321" description="In PMNDS; dbSNP:rs1162494442." evidence="17">
    <original>R</original>
    <variation>H</variation>
    <location>
        <position position="1136"/>
    </location>
</feature>
<feature type="sequence variant" id="VAR_087322" description="In PMNDS; dbSNP:rs2100846484." evidence="17">
    <original>N</original>
    <variation>I</variation>
    <location>
        <position position="1140"/>
    </location>
</feature>
<feature type="sequence variant" id="VAR_048729" description="In dbSNP:rs6657997.">
    <original>S</original>
    <variation>I</variation>
    <location>
        <position position="1253"/>
    </location>
</feature>
<feature type="sequence variant" id="VAR_087323" description="In PMNDS; dbSNP:rs371488822." evidence="17">
    <original>I</original>
    <variation>M</variation>
    <location>
        <position position="1419"/>
    </location>
</feature>
<feature type="sequence variant" id="VAR_087324" description="In PMNDS; dbSNP:rs2100842233." evidence="17">
    <original>D</original>
    <variation>V</variation>
    <location>
        <position position="1488"/>
    </location>
</feature>
<feature type="sequence variant" id="VAR_048730" description="In dbSNP:rs2843493." evidence="13 18">
    <original>S</original>
    <variation>P</variation>
    <location>
        <position position="1539"/>
    </location>
</feature>
<feature type="sequence variant" id="VAR_087325" description="In PMNDS; dbSNP:rs781200968." evidence="17">
    <original>E</original>
    <variation>G</variation>
    <location>
        <position position="1714"/>
    </location>
</feature>
<feature type="mutagenesis site" description="Reduced affinity for trimethylated histone H3K27me3." evidence="15">
    <original>L</original>
    <variation>A</variation>
    <location>
        <position position="518"/>
    </location>
</feature>
<feature type="mutagenesis site" description="Reduced affinity for trimethylated histone H3K27me3." evidence="15">
    <original>Y</original>
    <variation>E</variation>
    <location>
        <position position="619"/>
    </location>
</feature>
<feature type="mutagenesis site" description="Abolishes methylation by N6AMT1." evidence="16">
    <original>Q</original>
    <variation>R</variation>
    <location>
        <position position="1390"/>
    </location>
</feature>
<feature type="turn" evidence="21">
    <location>
        <begin position="420"/>
        <end position="422"/>
    </location>
</feature>
<feature type="strand" evidence="21">
    <location>
        <begin position="432"/>
        <end position="435"/>
    </location>
</feature>
<feature type="turn" evidence="21">
    <location>
        <begin position="440"/>
        <end position="442"/>
    </location>
</feature>
<feature type="strand" evidence="21">
    <location>
        <begin position="443"/>
        <end position="445"/>
    </location>
</feature>
<feature type="helix" evidence="21">
    <location>
        <begin position="458"/>
        <end position="461"/>
    </location>
</feature>
<feature type="strand" evidence="21">
    <location>
        <begin position="469"/>
        <end position="477"/>
    </location>
</feature>
<feature type="strand" evidence="21">
    <location>
        <begin position="509"/>
        <end position="515"/>
    </location>
</feature>
<feature type="helix" evidence="21">
    <location>
        <begin position="520"/>
        <end position="522"/>
    </location>
</feature>
<feature type="strand" evidence="21">
    <location>
        <begin position="524"/>
        <end position="527"/>
    </location>
</feature>
<feature type="helix" evidence="21">
    <location>
        <begin position="528"/>
        <end position="534"/>
    </location>
</feature>
<feature type="helix" evidence="21">
    <location>
        <begin position="536"/>
        <end position="545"/>
    </location>
</feature>
<feature type="strand" evidence="21">
    <location>
        <begin position="548"/>
        <end position="550"/>
    </location>
</feature>
<feature type="helix" evidence="21">
    <location>
        <begin position="575"/>
        <end position="581"/>
    </location>
</feature>
<feature type="helix" evidence="21">
    <location>
        <begin position="583"/>
        <end position="585"/>
    </location>
</feature>
<feature type="helix" evidence="21">
    <location>
        <begin position="589"/>
        <end position="592"/>
    </location>
</feature>
<feature type="strand" evidence="21">
    <location>
        <begin position="593"/>
        <end position="602"/>
    </location>
</feature>
<feature type="strand" evidence="21">
    <location>
        <begin position="608"/>
        <end position="614"/>
    </location>
</feature>
<feature type="helix" evidence="21">
    <location>
        <begin position="619"/>
        <end position="621"/>
    </location>
</feature>
<feature type="strand" evidence="21">
    <location>
        <begin position="623"/>
        <end position="628"/>
    </location>
</feature>
<feature type="helix" evidence="21">
    <location>
        <begin position="634"/>
        <end position="642"/>
    </location>
</feature>
<feature type="helix" evidence="21">
    <location>
        <begin position="644"/>
        <end position="647"/>
    </location>
</feature>
<comment type="function">
    <text evidence="1 15">ATP-dependent chromatin-remodeling factor that binds DNA through histones and regulates gene transcription. May specifically recognize and bind trimethylated 'Lys-27' (H3K27me3) and non-methylated 'Lys-4' of histone H3. Acts as a component of the histone deacetylase NuRD complex which participates in the remodeling of chromatin. Plays a role in the development of the nervous system by activating the expression of genes promoting neuron terminal differentiation. In parallel, it may also positively regulate the trimethylation of histone H3 at 'Lys-27' thereby specifically repressing genes that promote the differentiation into non-neuronal cell lineages. Regulates the expression of genes involved in cell proliferation and differentiation. Downstream activated genes may include CDKN2A that positively regulates the p53/TP53 pathway, which in turn, prevents cell proliferation. In spermatogenesis, it probably regulates histone hyperacetylation and the replacement of histones by transition proteins in chromatin, a crucial step in the condensation of spermatid chromatin and the production of functional spermatozoa.</text>
</comment>
<comment type="catalytic activity">
    <reaction evidence="2">
        <text>ATP + H2O = ADP + phosphate + H(+)</text>
        <dbReference type="Rhea" id="RHEA:13065"/>
        <dbReference type="ChEBI" id="CHEBI:15377"/>
        <dbReference type="ChEBI" id="CHEBI:15378"/>
        <dbReference type="ChEBI" id="CHEBI:30616"/>
        <dbReference type="ChEBI" id="CHEBI:43474"/>
        <dbReference type="ChEBI" id="CHEBI:456216"/>
    </reaction>
</comment>
<comment type="subunit">
    <text evidence="1">Component of the nucleosome remodeling and deacetylase (NuRD) repressor complex, composed of core proteins MTA1, MTA2, MTA3, RBBP4, RBBP7, HDAC1, HDAC2, MBD2, MBD3, and peripherally associated proteins CDK2AP1, CDK2AP2, GATAD2A, GATAD2B, CHD3, CHD4 and CHD5. The exact stoichiometry of the NuRD complex is unknown, and some subunits such as MBD2 and MBD3, GATAD2A and GATAD2B, and CHD3, CHD4 and CHD5 define mutually exclusive NuRD complexes. Interacts with HDAC2.</text>
</comment>
<comment type="subcellular location">
    <subcellularLocation>
        <location evidence="14 15">Nucleus</location>
    </subcellularLocation>
    <subcellularLocation>
        <location evidence="1">Chromosome</location>
    </subcellularLocation>
</comment>
<comment type="tissue specificity">
    <text evidence="10 14">Preferentially expressed in total brain, fetal brain, and cerebellum. It is also moderately expressed in the adrenal gland and detected in testis.</text>
</comment>
<comment type="domain">
    <text evidence="1">The PHD domains mediate specific binding to histone H3 unmethylated at 'Lys-4' and may preferentially recruit the protein to transcriptionally inactive genes.</text>
</comment>
<comment type="domain">
    <text evidence="15">The chromo domains mediate specific binding to histone H3 trimethylated at 'Lys-27' (H3K27me3) and may be required in neuron differentiation for proper gene regulation.</text>
</comment>
<comment type="PTM">
    <text evidence="16">Methylated at Gln-1390 by N6AMT1.</text>
</comment>
<comment type="disease">
    <text evidence="12">Defects in CHD5 may be a cause of the development of cancers from epithelial, neural and hematopoietic origin. CHD5 is one of the missing genes in the del(1p36), a deletion which is extremely common in this type of cancers. A decrease of its expression, results in increased susceptibility of cells to Ras-mediated transformation in vitro and in vivo (PubMed:17289567).</text>
</comment>
<comment type="disease" evidence="17">
    <disease id="DI-06423">
        <name>Parenti-Mignot neurodevelopmental syndrome</name>
        <acronym>PMNDS</acronym>
        <description>An autosomal dominant neurodevelopmental disorder characterized by intellectual disability, speech delay, motor delay, behavioral problems, and epilepsy.</description>
        <dbReference type="MIM" id="619873"/>
    </disease>
    <text>The disease is caused by variants affecting the gene represented in this entry.</text>
</comment>
<comment type="similarity">
    <text evidence="4">Belongs to the SNF2/RAD54 helicase family.</text>
</comment>
<comment type="online information" name="Atlas of Genetics and Cytogenetics in Oncology and Haematology">
    <link uri="https://atlasgeneticsoncology.org/gene/44521/CHD5"/>
</comment>
<sequence length="1954" mass="223050">MRGPVGTEEELPRLFAEEMENEDEMSEEEDGGLEAFDDFFPVEPVSLPKKKKPKKLKENKCKGKRKKKEGSNDELSENEEDLEEKSESEGSDYSPNKKKKKKLKDKKEKKAKRKKKDEDEDDNDDGCLKEPKSSGQLMAEWGLDDVDYLFSEEDYHTLTNYKAFSQFLRPLIAKKNPKIPMSKMMTVLGAKWREFSANNPFKGSSAAAAAAAVAAAVETVTISPPLAVSPPQVPQPVPIRKAKTKEGKGPGVRKKIKGSKDGKKKGKGKKTAGLKFRFGGISNKRKKGSSSEEDEREESDFDSASIHSASVRSECSAALGKKSKRRRKKKRIDDGDGYETDHQDYCEVCQQGGEIILCDTCPRAYHLVCLDPELEKAPEGKWSCPHCEKEGIQWEPKDDDDEEEEGGCEEEEDDHMEFCRVCKDGGELLCCDACPSSYHLHCLNPPLPEIPNGEWLCPRCTCPPLKGKVQRILHWRWTEPPAPFMVGLPGPDVEPSLPPPKPLEGIPEREFFVKWAGLSYWHCSWVKELQLELYHTVMYRNYQRKNDMDEPPPFDYGSGDEDGKSEKRKNKDPLYAKMEERFYRYGIKPEWMMIHRILNHSFDKKGDVHYLIKWKDLPYDQCTWEIDDIDIPYYDNLKQAYWGHRELMLGEDTRLPKRLLKKGKKLRDDKQEKPPDTPIVDPTVKFDKQPWYIDSTGGTLHPYQLEGLNWLRFSWAQGTDTILADEMGLGKTVQTIVFLYSLYKEGHSKGPYLVSAPLSTIINWEREFEMWAPDFYVVTYTGDKESRSVIRENEFSFEDNAIRSGKKVFRMKKEVQIKFHVLLTSYELITIDQAILGSIEWACLVVDEAHRLKNNQSKFFRVLNSYKIDYKLLLTGTPLQNNLEELFHLLNFLTPERFNNLEGFLEEFADISKEDQIKKLHDLLGPHMLRRLKADVFKNMPAKTELIVRVELSQMQKKYYKFILTRNFEALNSKGGGNQVSLLNIMMDLKKCCNHPYLFPVAAVEAPVLPNGSYDGSSLVKSSGKLMLLQKMLKKLRDEGHRVLIFSQMTKMLDLLEDFLEYEGYKYERIDGGITGGLRQEAIDRFNAPGAQQFCFLLSTRAGGLGINLATADTVIIYDSDWNPHNDIQAFSRAHRIGQNKKVMIYRFVTRASVEERITQVAKRKMMLTHLVVRPGLGSKSGSMTKQELDDILKFGTEELFKDDVEGMMSQGQRPVTPIPDVQSSKGGNLAASAKKKHGSTPPGDNKDVEDSSVIHYDDAAISKLLDRNQDATDDTELQNMNEYLSSFKVAQYVVREEDGVEEVEREIIKQEENVDPDYWEKLLRHHYEQQQEDLARNLGKGKRIRKQVNYNDASQEDQEWQDELSDNQSEYSIGSEDEDEDFEERPEGQSGRRQSRRQLKSDRDKPLPPLLARVGGNIEVLGFNARQRKAFLNAIMRWGMPPQDAFNSHWLVRDLRGKSEKEFRAYVSLFMRHLCEPGADGAETFADGVPREGLSRQHVLTRIGVMSLVRKKVQEFEHVNGKYSTPDLIPEGPEGKKSGEVISSDPNTPVPASPAHLLPAPLGLPDKMEAQLGYMDEKDPGAQKPRQPLEVQALPAALDRVESEDKHESPASKERAREERPEETEKAPPSPEQLPREEVLPEKEKILDKLELSLIHSRGDSSELRPDDTKAEEKEPIETQQNGDKEEDDEGKKEDKKGKFKFMFNIADGGFTELHTLWQNEERAAVSSGKIYDIWHRRHDYWLLAGIVTHGYARWQDIQNDPRYMILNEPFKSEVHKGNYLEMKNKFLARRFKLLEQALVIEEQLRRAAYLNMTQDPNHPAMALNARLAEVECLAESHQHLSKESLAGNKPANAVLHKVLNQLEELLSDMKADVTRLPSMLSRIPPVAARLQMSERSILSRLTNRAGDPTIQQGAFGSSQMYSNNFGPNFRGPGPGGIVNYNQMPLGPYVTDI</sequence>
<keyword id="KW-0002">3D-structure</keyword>
<keyword id="KW-0067">ATP-binding</keyword>
<keyword id="KW-0156">Chromatin regulator</keyword>
<keyword id="KW-0158">Chromosome</keyword>
<keyword id="KW-0221">Differentiation</keyword>
<keyword id="KW-0225">Disease variant</keyword>
<keyword id="KW-0238">DNA-binding</keyword>
<keyword id="KW-0887">Epilepsy</keyword>
<keyword id="KW-0378">Hydrolase</keyword>
<keyword id="KW-0991">Intellectual disability</keyword>
<keyword id="KW-0479">Metal-binding</keyword>
<keyword id="KW-0488">Methylation</keyword>
<keyword id="KW-0524">Neurogenesis</keyword>
<keyword id="KW-0547">Nucleotide-binding</keyword>
<keyword id="KW-0539">Nucleus</keyword>
<keyword id="KW-0597">Phosphoprotein</keyword>
<keyword id="KW-1267">Proteomics identification</keyword>
<keyword id="KW-1185">Reference proteome</keyword>
<keyword id="KW-0677">Repeat</keyword>
<keyword id="KW-0744">Spermatogenesis</keyword>
<keyword id="KW-0804">Transcription</keyword>
<keyword id="KW-0805">Transcription regulation</keyword>
<keyword id="KW-0043">Tumor suppressor</keyword>
<keyword id="KW-0862">Zinc</keyword>
<keyword id="KW-0863">Zinc-finger</keyword>
<dbReference type="EC" id="3.6.4.-" evidence="2"/>
<dbReference type="EMBL" id="AF425231">
    <property type="protein sequence ID" value="AAL98962.1"/>
    <property type="molecule type" value="mRNA"/>
</dbReference>
<dbReference type="EMBL" id="AL031847">
    <property type="status" value="NOT_ANNOTATED_CDS"/>
    <property type="molecule type" value="Genomic_DNA"/>
</dbReference>
<dbReference type="EMBL" id="AL035406">
    <property type="status" value="NOT_ANNOTATED_CDS"/>
    <property type="molecule type" value="Genomic_DNA"/>
</dbReference>
<dbReference type="EMBL" id="AL117491">
    <property type="protein sequence ID" value="CAB55959.1"/>
    <property type="molecule type" value="mRNA"/>
</dbReference>
<dbReference type="EMBL" id="AB007913">
    <property type="protein sequence ID" value="BAA32289.1"/>
    <property type="molecule type" value="mRNA"/>
</dbReference>
<dbReference type="CCDS" id="CCDS57.1"/>
<dbReference type="PIR" id="T17269">
    <property type="entry name" value="T17269"/>
</dbReference>
<dbReference type="RefSeq" id="NP_056372.1">
    <property type="nucleotide sequence ID" value="NM_015557.3"/>
</dbReference>
<dbReference type="PDB" id="6GUU">
    <property type="method" value="X-ray"/>
    <property type="resolution" value="2.95 A"/>
    <property type="chains" value="A/B=412-649"/>
</dbReference>
<dbReference type="PDBsum" id="6GUU"/>
<dbReference type="SMR" id="Q8TDI0"/>
<dbReference type="BioGRID" id="117504">
    <property type="interactions" value="74"/>
</dbReference>
<dbReference type="FunCoup" id="Q8TDI0">
    <property type="interactions" value="1308"/>
</dbReference>
<dbReference type="IntAct" id="Q8TDI0">
    <property type="interactions" value="25"/>
</dbReference>
<dbReference type="MINT" id="Q8TDI0"/>
<dbReference type="STRING" id="9606.ENSP00000262450"/>
<dbReference type="GlyGen" id="Q8TDI0">
    <property type="glycosylation" value="2 sites, 1 O-linked glycan (1 site)"/>
</dbReference>
<dbReference type="iPTMnet" id="Q8TDI0"/>
<dbReference type="PhosphoSitePlus" id="Q8TDI0"/>
<dbReference type="BioMuta" id="CHD5"/>
<dbReference type="DMDM" id="51701343"/>
<dbReference type="jPOST" id="Q8TDI0"/>
<dbReference type="MassIVE" id="Q8TDI0"/>
<dbReference type="PaxDb" id="9606-ENSP00000262450"/>
<dbReference type="PeptideAtlas" id="Q8TDI0"/>
<dbReference type="ProteomicsDB" id="74289"/>
<dbReference type="Antibodypedia" id="27125">
    <property type="antibodies" value="133 antibodies from 29 providers"/>
</dbReference>
<dbReference type="DNASU" id="26038"/>
<dbReference type="Ensembl" id="ENST00000262450.8">
    <property type="protein sequence ID" value="ENSP00000262450.3"/>
    <property type="gene ID" value="ENSG00000116254.18"/>
</dbReference>
<dbReference type="GeneID" id="26038"/>
<dbReference type="KEGG" id="hsa:26038"/>
<dbReference type="MANE-Select" id="ENST00000262450.8">
    <property type="protein sequence ID" value="ENSP00000262450.3"/>
    <property type="RefSeq nucleotide sequence ID" value="NM_015557.3"/>
    <property type="RefSeq protein sequence ID" value="NP_056372.1"/>
</dbReference>
<dbReference type="UCSC" id="uc001amb.3">
    <property type="organism name" value="human"/>
</dbReference>
<dbReference type="AGR" id="HGNC:16816"/>
<dbReference type="CTD" id="26038"/>
<dbReference type="DisGeNET" id="26038"/>
<dbReference type="GeneCards" id="CHD5"/>
<dbReference type="HGNC" id="HGNC:16816">
    <property type="gene designation" value="CHD5"/>
</dbReference>
<dbReference type="HPA" id="ENSG00000116254">
    <property type="expression patterns" value="Group enriched (brain, pituitary gland, testis)"/>
</dbReference>
<dbReference type="MalaCards" id="CHD5"/>
<dbReference type="MIM" id="610771">
    <property type="type" value="gene"/>
</dbReference>
<dbReference type="MIM" id="619873">
    <property type="type" value="phenotype"/>
</dbReference>
<dbReference type="neXtProt" id="NX_Q8TDI0"/>
<dbReference type="OpenTargets" id="ENSG00000116254"/>
<dbReference type="Orphanet" id="528084">
    <property type="disease" value="Non-specific syndromic intellectual disability"/>
</dbReference>
<dbReference type="PharmGKB" id="PA134969178"/>
<dbReference type="VEuPathDB" id="HostDB:ENSG00000116254"/>
<dbReference type="eggNOG" id="KOG0383">
    <property type="taxonomic scope" value="Eukaryota"/>
</dbReference>
<dbReference type="GeneTree" id="ENSGT00940000159249"/>
<dbReference type="HOGENOM" id="CLU_000315_22_1_1"/>
<dbReference type="InParanoid" id="Q8TDI0"/>
<dbReference type="OMA" id="KVQKIMH"/>
<dbReference type="OrthoDB" id="5857104at2759"/>
<dbReference type="PAN-GO" id="Q8TDI0">
    <property type="GO annotations" value="10 GO annotations based on evolutionary models"/>
</dbReference>
<dbReference type="PhylomeDB" id="Q8TDI0"/>
<dbReference type="TreeFam" id="TF106448"/>
<dbReference type="PathwayCommons" id="Q8TDI0"/>
<dbReference type="SignaLink" id="Q8TDI0"/>
<dbReference type="BioGRID-ORCS" id="26038">
    <property type="hits" value="15 hits in 1161 CRISPR screens"/>
</dbReference>
<dbReference type="CD-CODE" id="91857CE7">
    <property type="entry name" value="Nucleolus"/>
</dbReference>
<dbReference type="ChiTaRS" id="CHD5">
    <property type="organism name" value="human"/>
</dbReference>
<dbReference type="GeneWiki" id="CHD5"/>
<dbReference type="GenomeRNAi" id="26038"/>
<dbReference type="Pharos" id="Q8TDI0">
    <property type="development level" value="Tbio"/>
</dbReference>
<dbReference type="PRO" id="PR:Q8TDI0"/>
<dbReference type="Proteomes" id="UP000005640">
    <property type="component" value="Chromosome 1"/>
</dbReference>
<dbReference type="RNAct" id="Q8TDI0">
    <property type="molecule type" value="protein"/>
</dbReference>
<dbReference type="Bgee" id="ENSG00000116254">
    <property type="expression patterns" value="Expressed in sperm and 135 other cell types or tissues"/>
</dbReference>
<dbReference type="ExpressionAtlas" id="Q8TDI0">
    <property type="expression patterns" value="baseline and differential"/>
</dbReference>
<dbReference type="GO" id="GO:0000785">
    <property type="term" value="C:chromatin"/>
    <property type="evidence" value="ECO:0000318"/>
    <property type="project" value="GO_Central"/>
</dbReference>
<dbReference type="GO" id="GO:0005829">
    <property type="term" value="C:cytosol"/>
    <property type="evidence" value="ECO:0000314"/>
    <property type="project" value="HPA"/>
</dbReference>
<dbReference type="GO" id="GO:0000792">
    <property type="term" value="C:heterochromatin"/>
    <property type="evidence" value="ECO:0000250"/>
    <property type="project" value="UniProtKB"/>
</dbReference>
<dbReference type="GO" id="GO:0016020">
    <property type="term" value="C:membrane"/>
    <property type="evidence" value="ECO:0007005"/>
    <property type="project" value="UniProtKB"/>
</dbReference>
<dbReference type="GO" id="GO:0016607">
    <property type="term" value="C:nuclear speck"/>
    <property type="evidence" value="ECO:0000314"/>
    <property type="project" value="HPA"/>
</dbReference>
<dbReference type="GO" id="GO:0005654">
    <property type="term" value="C:nucleoplasm"/>
    <property type="evidence" value="ECO:0000314"/>
    <property type="project" value="HPA"/>
</dbReference>
<dbReference type="GO" id="GO:0005634">
    <property type="term" value="C:nucleus"/>
    <property type="evidence" value="ECO:0000314"/>
    <property type="project" value="UniProtKB"/>
</dbReference>
<dbReference type="GO" id="GO:0016581">
    <property type="term" value="C:NuRD complex"/>
    <property type="evidence" value="ECO:0000250"/>
    <property type="project" value="UniProtKB"/>
</dbReference>
<dbReference type="GO" id="GO:0005524">
    <property type="term" value="F:ATP binding"/>
    <property type="evidence" value="ECO:0007669"/>
    <property type="project" value="UniProtKB-KW"/>
</dbReference>
<dbReference type="GO" id="GO:0016887">
    <property type="term" value="F:ATP hydrolysis activity"/>
    <property type="evidence" value="ECO:0000318"/>
    <property type="project" value="GO_Central"/>
</dbReference>
<dbReference type="GO" id="GO:0140658">
    <property type="term" value="F:ATP-dependent chromatin remodeler activity"/>
    <property type="evidence" value="ECO:0000318"/>
    <property type="project" value="GO_Central"/>
</dbReference>
<dbReference type="GO" id="GO:0003682">
    <property type="term" value="F:chromatin binding"/>
    <property type="evidence" value="ECO:0000318"/>
    <property type="project" value="GO_Central"/>
</dbReference>
<dbReference type="GO" id="GO:0003677">
    <property type="term" value="F:DNA binding"/>
    <property type="evidence" value="ECO:0000318"/>
    <property type="project" value="GO_Central"/>
</dbReference>
<dbReference type="GO" id="GO:0004386">
    <property type="term" value="F:helicase activity"/>
    <property type="evidence" value="ECO:0007669"/>
    <property type="project" value="UniProtKB-KW"/>
</dbReference>
<dbReference type="GO" id="GO:0042393">
    <property type="term" value="F:histone binding"/>
    <property type="evidence" value="ECO:0000318"/>
    <property type="project" value="GO_Central"/>
</dbReference>
<dbReference type="GO" id="GO:0061628">
    <property type="term" value="F:histone H3K27me3 reader activity"/>
    <property type="evidence" value="ECO:0000314"/>
    <property type="project" value="UniProtKB"/>
</dbReference>
<dbReference type="GO" id="GO:0008270">
    <property type="term" value="F:zinc ion binding"/>
    <property type="evidence" value="ECO:0007669"/>
    <property type="project" value="UniProtKB-KW"/>
</dbReference>
<dbReference type="GO" id="GO:0021895">
    <property type="term" value="P:cerebral cortex neuron differentiation"/>
    <property type="evidence" value="ECO:0000250"/>
    <property type="project" value="UniProtKB"/>
</dbReference>
<dbReference type="GO" id="GO:0006338">
    <property type="term" value="P:chromatin remodeling"/>
    <property type="evidence" value="ECO:0000315"/>
    <property type="project" value="UniProtKB"/>
</dbReference>
<dbReference type="GO" id="GO:0008285">
    <property type="term" value="P:negative regulation of cell population proliferation"/>
    <property type="evidence" value="ECO:0000250"/>
    <property type="project" value="UniProtKB"/>
</dbReference>
<dbReference type="GO" id="GO:1901798">
    <property type="term" value="P:positive regulation of signal transduction by p53 class mediator"/>
    <property type="evidence" value="ECO:0000250"/>
    <property type="project" value="UniProtKB"/>
</dbReference>
<dbReference type="GO" id="GO:0006357">
    <property type="term" value="P:regulation of transcription by RNA polymerase II"/>
    <property type="evidence" value="ECO:0000315"/>
    <property type="project" value="GO_Central"/>
</dbReference>
<dbReference type="GO" id="GO:0035092">
    <property type="term" value="P:sperm DNA condensation"/>
    <property type="evidence" value="ECO:0000250"/>
    <property type="project" value="UniProtKB"/>
</dbReference>
<dbReference type="CDD" id="cd18667">
    <property type="entry name" value="CD1_tandem_CHD3-4_like"/>
    <property type="match status" value="1"/>
</dbReference>
<dbReference type="CDD" id="cd18662">
    <property type="entry name" value="CD2_tandem_CHD3-4_like"/>
    <property type="match status" value="1"/>
</dbReference>
<dbReference type="CDD" id="cd18057">
    <property type="entry name" value="DEXHc_CHD5"/>
    <property type="match status" value="1"/>
</dbReference>
<dbReference type="CDD" id="cd15531">
    <property type="entry name" value="PHD1_CHD_II"/>
    <property type="match status" value="1"/>
</dbReference>
<dbReference type="CDD" id="cd15532">
    <property type="entry name" value="PHD2_CHD_II"/>
    <property type="match status" value="1"/>
</dbReference>
<dbReference type="CDD" id="cd18793">
    <property type="entry name" value="SF2_C_SNF"/>
    <property type="match status" value="1"/>
</dbReference>
<dbReference type="FunFam" id="1.10.10.60:FF:000037">
    <property type="entry name" value="chromodomain-helicase-DNA-binding protein 3 isoform X1"/>
    <property type="match status" value="1"/>
</dbReference>
<dbReference type="FunFam" id="2.40.50.40:FF:000003">
    <property type="entry name" value="chromodomain-helicase-DNA-binding protein 3 isoform X1"/>
    <property type="match status" value="1"/>
</dbReference>
<dbReference type="FunFam" id="3.30.40.10:FF:000001">
    <property type="entry name" value="chromodomain-helicase-DNA-binding protein 3 isoform X1"/>
    <property type="match status" value="1"/>
</dbReference>
<dbReference type="FunFam" id="3.40.50.10810:FF:000001">
    <property type="entry name" value="chromodomain-helicase-DNA-binding protein 3 isoform X1"/>
    <property type="match status" value="1"/>
</dbReference>
<dbReference type="FunFam" id="3.30.40.10:FF:000011">
    <property type="entry name" value="chromodomain-helicase-DNA-binding protein 4 isoform X1"/>
    <property type="match status" value="1"/>
</dbReference>
<dbReference type="FunFam" id="3.40.50.300:FF:000015">
    <property type="entry name" value="chromodomain-helicase-DNA-binding protein 9 isoform X1"/>
    <property type="match status" value="1"/>
</dbReference>
<dbReference type="Gene3D" id="2.40.50.40">
    <property type="match status" value="2"/>
</dbReference>
<dbReference type="Gene3D" id="1.10.10.60">
    <property type="entry name" value="Homeodomain-like"/>
    <property type="match status" value="1"/>
</dbReference>
<dbReference type="Gene3D" id="3.40.50.300">
    <property type="entry name" value="P-loop containing nucleotide triphosphate hydrolases"/>
    <property type="match status" value="1"/>
</dbReference>
<dbReference type="Gene3D" id="3.40.50.10810">
    <property type="entry name" value="Tandem AAA-ATPase domain"/>
    <property type="match status" value="1"/>
</dbReference>
<dbReference type="Gene3D" id="3.30.40.10">
    <property type="entry name" value="Zinc/RING finger domain, C3HC4 (zinc finger)"/>
    <property type="match status" value="2"/>
</dbReference>
<dbReference type="InterPro" id="IPR012957">
    <property type="entry name" value="CHD_C2"/>
</dbReference>
<dbReference type="InterPro" id="IPR009462">
    <property type="entry name" value="CHD_II_SANT-like"/>
</dbReference>
<dbReference type="InterPro" id="IPR012958">
    <property type="entry name" value="CHD_N"/>
</dbReference>
<dbReference type="InterPro" id="IPR016197">
    <property type="entry name" value="Chromo-like_dom_sf"/>
</dbReference>
<dbReference type="InterPro" id="IPR000953">
    <property type="entry name" value="Chromo/chromo_shadow_dom"/>
</dbReference>
<dbReference type="InterPro" id="IPR023780">
    <property type="entry name" value="Chromo_domain"/>
</dbReference>
<dbReference type="InterPro" id="IPR028727">
    <property type="entry name" value="DEXHc_CHD5"/>
</dbReference>
<dbReference type="InterPro" id="IPR002464">
    <property type="entry name" value="DNA/RNA_helicase_DEAH_CS"/>
</dbReference>
<dbReference type="InterPro" id="IPR009463">
    <property type="entry name" value="DUF1087"/>
</dbReference>
<dbReference type="InterPro" id="IPR014001">
    <property type="entry name" value="Helicase_ATP-bd"/>
</dbReference>
<dbReference type="InterPro" id="IPR001650">
    <property type="entry name" value="Helicase_C-like"/>
</dbReference>
<dbReference type="InterPro" id="IPR027417">
    <property type="entry name" value="P-loop_NTPase"/>
</dbReference>
<dbReference type="InterPro" id="IPR038718">
    <property type="entry name" value="SNF2-like_sf"/>
</dbReference>
<dbReference type="InterPro" id="IPR049730">
    <property type="entry name" value="SNF2/RAD54-like_C"/>
</dbReference>
<dbReference type="InterPro" id="IPR000330">
    <property type="entry name" value="SNF2_N"/>
</dbReference>
<dbReference type="InterPro" id="IPR019786">
    <property type="entry name" value="Zinc_finger_PHD-type_CS"/>
</dbReference>
<dbReference type="InterPro" id="IPR011011">
    <property type="entry name" value="Znf_FYVE_PHD"/>
</dbReference>
<dbReference type="InterPro" id="IPR001965">
    <property type="entry name" value="Znf_PHD"/>
</dbReference>
<dbReference type="InterPro" id="IPR019787">
    <property type="entry name" value="Znf_PHD-finger"/>
</dbReference>
<dbReference type="InterPro" id="IPR013083">
    <property type="entry name" value="Znf_RING/FYVE/PHD"/>
</dbReference>
<dbReference type="PANTHER" id="PTHR45623">
    <property type="entry name" value="CHROMODOMAIN-HELICASE-DNA-BINDING PROTEIN 3-RELATED-RELATED"/>
    <property type="match status" value="1"/>
</dbReference>
<dbReference type="PANTHER" id="PTHR45623:SF6">
    <property type="entry name" value="CHROMODOMAIN-HELICASE-DNA-BINDING PROTEIN 5"/>
    <property type="match status" value="1"/>
</dbReference>
<dbReference type="Pfam" id="PF08074">
    <property type="entry name" value="CHDCT2"/>
    <property type="match status" value="1"/>
</dbReference>
<dbReference type="Pfam" id="PF06461">
    <property type="entry name" value="CHDII_SANT-like"/>
    <property type="match status" value="1"/>
</dbReference>
<dbReference type="Pfam" id="PF08073">
    <property type="entry name" value="CHDNT"/>
    <property type="match status" value="1"/>
</dbReference>
<dbReference type="Pfam" id="PF00385">
    <property type="entry name" value="Chromo"/>
    <property type="match status" value="1"/>
</dbReference>
<dbReference type="Pfam" id="PF06465">
    <property type="entry name" value="DUF1087"/>
    <property type="match status" value="1"/>
</dbReference>
<dbReference type="Pfam" id="PF00271">
    <property type="entry name" value="Helicase_C"/>
    <property type="match status" value="1"/>
</dbReference>
<dbReference type="Pfam" id="PF00628">
    <property type="entry name" value="PHD"/>
    <property type="match status" value="2"/>
</dbReference>
<dbReference type="Pfam" id="PF00176">
    <property type="entry name" value="SNF2-rel_dom"/>
    <property type="match status" value="1"/>
</dbReference>
<dbReference type="SMART" id="SM00298">
    <property type="entry name" value="CHROMO"/>
    <property type="match status" value="2"/>
</dbReference>
<dbReference type="SMART" id="SM00487">
    <property type="entry name" value="DEXDc"/>
    <property type="match status" value="1"/>
</dbReference>
<dbReference type="SMART" id="SM01146">
    <property type="entry name" value="DUF1086"/>
    <property type="match status" value="1"/>
</dbReference>
<dbReference type="SMART" id="SM01147">
    <property type="entry name" value="DUF1087"/>
    <property type="match status" value="1"/>
</dbReference>
<dbReference type="SMART" id="SM00490">
    <property type="entry name" value="HELICc"/>
    <property type="match status" value="1"/>
</dbReference>
<dbReference type="SMART" id="SM00249">
    <property type="entry name" value="PHD"/>
    <property type="match status" value="2"/>
</dbReference>
<dbReference type="SUPFAM" id="SSF54160">
    <property type="entry name" value="Chromo domain-like"/>
    <property type="match status" value="2"/>
</dbReference>
<dbReference type="SUPFAM" id="SSF57903">
    <property type="entry name" value="FYVE/PHD zinc finger"/>
    <property type="match status" value="1"/>
</dbReference>
<dbReference type="SUPFAM" id="SSF52540">
    <property type="entry name" value="P-loop containing nucleoside triphosphate hydrolases"/>
    <property type="match status" value="2"/>
</dbReference>
<dbReference type="PROSITE" id="PS50013">
    <property type="entry name" value="CHROMO_2"/>
    <property type="match status" value="2"/>
</dbReference>
<dbReference type="PROSITE" id="PS00690">
    <property type="entry name" value="DEAH_ATP_HELICASE"/>
    <property type="match status" value="1"/>
</dbReference>
<dbReference type="PROSITE" id="PS51192">
    <property type="entry name" value="HELICASE_ATP_BIND_1"/>
    <property type="match status" value="1"/>
</dbReference>
<dbReference type="PROSITE" id="PS51194">
    <property type="entry name" value="HELICASE_CTER"/>
    <property type="match status" value="1"/>
</dbReference>
<dbReference type="PROSITE" id="PS01359">
    <property type="entry name" value="ZF_PHD_1"/>
    <property type="match status" value="2"/>
</dbReference>
<dbReference type="PROSITE" id="PS50016">
    <property type="entry name" value="ZF_PHD_2"/>
    <property type="match status" value="2"/>
</dbReference>
<name>CHD5_HUMAN</name>
<organism>
    <name type="scientific">Homo sapiens</name>
    <name type="common">Human</name>
    <dbReference type="NCBI Taxonomy" id="9606"/>
    <lineage>
        <taxon>Eukaryota</taxon>
        <taxon>Metazoa</taxon>
        <taxon>Chordata</taxon>
        <taxon>Craniata</taxon>
        <taxon>Vertebrata</taxon>
        <taxon>Euteleostomi</taxon>
        <taxon>Mammalia</taxon>
        <taxon>Eutheria</taxon>
        <taxon>Euarchontoglires</taxon>
        <taxon>Primates</taxon>
        <taxon>Haplorrhini</taxon>
        <taxon>Catarrhini</taxon>
        <taxon>Hominidae</taxon>
        <taxon>Homo</taxon>
    </lineage>
</organism>